<protein>
    <recommendedName>
        <fullName>Probable cation-transporting ATPase G</fullName>
        <ecNumber>7.2.2.-</ecNumber>
    </recommendedName>
</protein>
<accession>P9WPS7</accession>
<accession>L0TB69</accession>
<accession>P63689</accession>
<accession>Q10866</accession>
<keyword id="KW-0067">ATP-binding</keyword>
<keyword id="KW-1003">Cell membrane</keyword>
<keyword id="KW-0460">Magnesium</keyword>
<keyword id="KW-0472">Membrane</keyword>
<keyword id="KW-0479">Metal-binding</keyword>
<keyword id="KW-0547">Nucleotide-binding</keyword>
<keyword id="KW-1185">Reference proteome</keyword>
<keyword id="KW-1278">Translocase</keyword>
<keyword id="KW-0812">Transmembrane</keyword>
<keyword id="KW-1133">Transmembrane helix</keyword>
<reference key="1">
    <citation type="journal article" date="1998" name="Nature">
        <title>Deciphering the biology of Mycobacterium tuberculosis from the complete genome sequence.</title>
        <authorList>
            <person name="Cole S.T."/>
            <person name="Brosch R."/>
            <person name="Parkhill J."/>
            <person name="Garnier T."/>
            <person name="Churcher C.M."/>
            <person name="Harris D.E."/>
            <person name="Gordon S.V."/>
            <person name="Eiglmeier K."/>
            <person name="Gas S."/>
            <person name="Barry C.E. III"/>
            <person name="Tekaia F."/>
            <person name="Badcock K."/>
            <person name="Basham D."/>
            <person name="Brown D."/>
            <person name="Chillingworth T."/>
            <person name="Connor R."/>
            <person name="Davies R.M."/>
            <person name="Devlin K."/>
            <person name="Feltwell T."/>
            <person name="Gentles S."/>
            <person name="Hamlin N."/>
            <person name="Holroyd S."/>
            <person name="Hornsby T."/>
            <person name="Jagels K."/>
            <person name="Krogh A."/>
            <person name="McLean J."/>
            <person name="Moule S."/>
            <person name="Murphy L.D."/>
            <person name="Oliver S."/>
            <person name="Osborne J."/>
            <person name="Quail M.A."/>
            <person name="Rajandream M.A."/>
            <person name="Rogers J."/>
            <person name="Rutter S."/>
            <person name="Seeger K."/>
            <person name="Skelton S."/>
            <person name="Squares S."/>
            <person name="Squares R."/>
            <person name="Sulston J.E."/>
            <person name="Taylor K."/>
            <person name="Whitehead S."/>
            <person name="Barrell B.G."/>
        </authorList>
    </citation>
    <scope>NUCLEOTIDE SEQUENCE [LARGE SCALE GENOMIC DNA]</scope>
    <source>
        <strain>ATCC 25618 / H37Rv</strain>
    </source>
</reference>
<reference key="2">
    <citation type="journal article" date="2011" name="Mol. Cell. Proteomics">
        <title>Proteogenomic analysis of Mycobacterium tuberculosis by high resolution mass spectrometry.</title>
        <authorList>
            <person name="Kelkar D.S."/>
            <person name="Kumar D."/>
            <person name="Kumar P."/>
            <person name="Balakrishnan L."/>
            <person name="Muthusamy B."/>
            <person name="Yadav A.K."/>
            <person name="Shrivastava P."/>
            <person name="Marimuthu A."/>
            <person name="Anand S."/>
            <person name="Sundaram H."/>
            <person name="Kingsbury R."/>
            <person name="Harsha H.C."/>
            <person name="Nair B."/>
            <person name="Prasad T.S."/>
            <person name="Chauhan D.S."/>
            <person name="Katoch K."/>
            <person name="Katoch V.M."/>
            <person name="Kumar P."/>
            <person name="Chaerkady R."/>
            <person name="Ramachandran S."/>
            <person name="Dash D."/>
            <person name="Pandey A."/>
        </authorList>
    </citation>
    <scope>IDENTIFICATION BY MASS SPECTROMETRY [LARGE SCALE ANALYSIS]</scope>
    <source>
        <strain>ATCC 25618 / H37Rv</strain>
    </source>
</reference>
<feature type="chain" id="PRO_0000046345" description="Probable cation-transporting ATPase G">
    <location>
        <begin position="1"/>
        <end position="771"/>
    </location>
</feature>
<feature type="transmembrane region" description="Helical" evidence="2">
    <location>
        <begin position="72"/>
        <end position="92"/>
    </location>
</feature>
<feature type="transmembrane region" description="Helical" evidence="2">
    <location>
        <begin position="163"/>
        <end position="183"/>
    </location>
</feature>
<feature type="transmembrane region" description="Helical" evidence="2">
    <location>
        <begin position="209"/>
        <end position="229"/>
    </location>
</feature>
<feature type="transmembrane region" description="Helical" evidence="2">
    <location>
        <begin position="330"/>
        <end position="350"/>
    </location>
</feature>
<feature type="transmembrane region" description="Helical" evidence="2">
    <location>
        <begin position="387"/>
        <end position="407"/>
    </location>
</feature>
<feature type="transmembrane region" description="Helical" evidence="2">
    <location>
        <begin position="411"/>
        <end position="431"/>
    </location>
</feature>
<feature type="transmembrane region" description="Helical" evidence="2">
    <location>
        <begin position="657"/>
        <end position="677"/>
    </location>
</feature>
<feature type="transmembrane region" description="Helical" evidence="2">
    <location>
        <begin position="716"/>
        <end position="736"/>
    </location>
</feature>
<feature type="domain" description="HMA" evidence="3">
    <location>
        <begin position="19"/>
        <end position="86"/>
    </location>
</feature>
<feature type="region of interest" description="Disordered" evidence="4">
    <location>
        <begin position="122"/>
        <end position="143"/>
    </location>
</feature>
<feature type="active site" description="4-aspartylphosphate intermediate" evidence="1">
    <location>
        <position position="462"/>
    </location>
</feature>
<feature type="binding site" evidence="1">
    <location>
        <position position="651"/>
    </location>
    <ligand>
        <name>Mg(2+)</name>
        <dbReference type="ChEBI" id="CHEBI:18420"/>
    </ligand>
</feature>
<feature type="binding site" evidence="1">
    <location>
        <position position="655"/>
    </location>
    <ligand>
        <name>Mg(2+)</name>
        <dbReference type="ChEBI" id="CHEBI:18420"/>
    </ligand>
</feature>
<proteinExistence type="evidence at protein level"/>
<dbReference type="EC" id="7.2.2.-"/>
<dbReference type="EMBL" id="AL123456">
    <property type="protein sequence ID" value="CCP44764.1"/>
    <property type="molecule type" value="Genomic_DNA"/>
</dbReference>
<dbReference type="PIR" id="F70757">
    <property type="entry name" value="F70757"/>
</dbReference>
<dbReference type="RefSeq" id="NP_216508.1">
    <property type="nucleotide sequence ID" value="NC_000962.3"/>
</dbReference>
<dbReference type="RefSeq" id="WP_003899120.1">
    <property type="nucleotide sequence ID" value="NZ_NVQJ01000043.1"/>
</dbReference>
<dbReference type="SMR" id="P9WPS7"/>
<dbReference type="STRING" id="83332.Rv1992c"/>
<dbReference type="PaxDb" id="83332-Rv1992c"/>
<dbReference type="DNASU" id="888914"/>
<dbReference type="GeneID" id="888914"/>
<dbReference type="KEGG" id="mtu:Rv1992c"/>
<dbReference type="KEGG" id="mtv:RVBD_1992c"/>
<dbReference type="TubercuList" id="Rv1992c"/>
<dbReference type="eggNOG" id="COG2217">
    <property type="taxonomic scope" value="Bacteria"/>
</dbReference>
<dbReference type="InParanoid" id="P9WPS7"/>
<dbReference type="OrthoDB" id="7059309at2"/>
<dbReference type="PhylomeDB" id="P9WPS7"/>
<dbReference type="Proteomes" id="UP000001584">
    <property type="component" value="Chromosome"/>
</dbReference>
<dbReference type="GO" id="GO:0016020">
    <property type="term" value="C:membrane"/>
    <property type="evidence" value="ECO:0000318"/>
    <property type="project" value="GO_Central"/>
</dbReference>
<dbReference type="GO" id="GO:0005886">
    <property type="term" value="C:plasma membrane"/>
    <property type="evidence" value="ECO:0007005"/>
    <property type="project" value="MTBBASE"/>
</dbReference>
<dbReference type="GO" id="GO:0005524">
    <property type="term" value="F:ATP binding"/>
    <property type="evidence" value="ECO:0007669"/>
    <property type="project" value="UniProtKB-KW"/>
</dbReference>
<dbReference type="GO" id="GO:0016887">
    <property type="term" value="F:ATP hydrolysis activity"/>
    <property type="evidence" value="ECO:0007669"/>
    <property type="project" value="InterPro"/>
</dbReference>
<dbReference type="GO" id="GO:0019829">
    <property type="term" value="F:ATPase-coupled monoatomic cation transmembrane transporter activity"/>
    <property type="evidence" value="ECO:0007669"/>
    <property type="project" value="InterPro"/>
</dbReference>
<dbReference type="GO" id="GO:0015086">
    <property type="term" value="F:cadmium ion transmembrane transporter activity"/>
    <property type="evidence" value="ECO:0000318"/>
    <property type="project" value="GO_Central"/>
</dbReference>
<dbReference type="GO" id="GO:0046872">
    <property type="term" value="F:metal ion binding"/>
    <property type="evidence" value="ECO:0007669"/>
    <property type="project" value="UniProtKB-KW"/>
</dbReference>
<dbReference type="GO" id="GO:0030001">
    <property type="term" value="P:metal ion transport"/>
    <property type="evidence" value="ECO:0000318"/>
    <property type="project" value="GO_Central"/>
</dbReference>
<dbReference type="GO" id="GO:0046688">
    <property type="term" value="P:response to copper ion"/>
    <property type="evidence" value="ECO:0000314"/>
    <property type="project" value="MTBBASE"/>
</dbReference>
<dbReference type="GO" id="GO:0055085">
    <property type="term" value="P:transmembrane transport"/>
    <property type="evidence" value="ECO:0000318"/>
    <property type="project" value="GO_Central"/>
</dbReference>
<dbReference type="CDD" id="cd02079">
    <property type="entry name" value="P-type_ATPase_HM"/>
    <property type="match status" value="1"/>
</dbReference>
<dbReference type="FunFam" id="2.70.150.10:FF:000097">
    <property type="entry name" value="Cation transporter ATPase G"/>
    <property type="match status" value="1"/>
</dbReference>
<dbReference type="Gene3D" id="3.40.1110.10">
    <property type="entry name" value="Calcium-transporting ATPase, cytoplasmic domain N"/>
    <property type="match status" value="1"/>
</dbReference>
<dbReference type="Gene3D" id="2.70.150.10">
    <property type="entry name" value="Calcium-transporting ATPase, cytoplasmic transduction domain A"/>
    <property type="match status" value="1"/>
</dbReference>
<dbReference type="Gene3D" id="3.40.50.1000">
    <property type="entry name" value="HAD superfamily/HAD-like"/>
    <property type="match status" value="1"/>
</dbReference>
<dbReference type="InterPro" id="IPR023299">
    <property type="entry name" value="ATPase_P-typ_cyto_dom_N"/>
</dbReference>
<dbReference type="InterPro" id="IPR018303">
    <property type="entry name" value="ATPase_P-typ_P_site"/>
</dbReference>
<dbReference type="InterPro" id="IPR023298">
    <property type="entry name" value="ATPase_P-typ_TM_dom_sf"/>
</dbReference>
<dbReference type="InterPro" id="IPR008250">
    <property type="entry name" value="ATPase_P-typ_transduc_dom_A_sf"/>
</dbReference>
<dbReference type="InterPro" id="IPR051014">
    <property type="entry name" value="Cation_Transport_ATPase_IB"/>
</dbReference>
<dbReference type="InterPro" id="IPR036412">
    <property type="entry name" value="HAD-like_sf"/>
</dbReference>
<dbReference type="InterPro" id="IPR023214">
    <property type="entry name" value="HAD_sf"/>
</dbReference>
<dbReference type="InterPro" id="IPR006121">
    <property type="entry name" value="HMA_dom"/>
</dbReference>
<dbReference type="InterPro" id="IPR027256">
    <property type="entry name" value="P-typ_ATPase_IB"/>
</dbReference>
<dbReference type="InterPro" id="IPR001757">
    <property type="entry name" value="P_typ_ATPase"/>
</dbReference>
<dbReference type="InterPro" id="IPR044492">
    <property type="entry name" value="P_typ_ATPase_HD_dom"/>
</dbReference>
<dbReference type="NCBIfam" id="TIGR01512">
    <property type="entry name" value="ATPase-IB2_Cd"/>
    <property type="match status" value="1"/>
</dbReference>
<dbReference type="NCBIfam" id="TIGR01525">
    <property type="entry name" value="ATPase-IB_hvy"/>
    <property type="match status" value="1"/>
</dbReference>
<dbReference type="NCBIfam" id="TIGR01494">
    <property type="entry name" value="ATPase_P-type"/>
    <property type="match status" value="1"/>
</dbReference>
<dbReference type="PANTHER" id="PTHR48085">
    <property type="entry name" value="CADMIUM/ZINC-TRANSPORTING ATPASE HMA2-RELATED"/>
    <property type="match status" value="1"/>
</dbReference>
<dbReference type="PANTHER" id="PTHR48085:SF5">
    <property type="entry name" value="CADMIUM_ZINC-TRANSPORTING ATPASE HMA4-RELATED"/>
    <property type="match status" value="1"/>
</dbReference>
<dbReference type="Pfam" id="PF00122">
    <property type="entry name" value="E1-E2_ATPase"/>
    <property type="match status" value="1"/>
</dbReference>
<dbReference type="Pfam" id="PF00702">
    <property type="entry name" value="Hydrolase"/>
    <property type="match status" value="1"/>
</dbReference>
<dbReference type="PRINTS" id="PR00119">
    <property type="entry name" value="CATATPASE"/>
</dbReference>
<dbReference type="SFLD" id="SFLDS00003">
    <property type="entry name" value="Haloacid_Dehalogenase"/>
    <property type="match status" value="1"/>
</dbReference>
<dbReference type="SFLD" id="SFLDF00027">
    <property type="entry name" value="p-type_atpase"/>
    <property type="match status" value="1"/>
</dbReference>
<dbReference type="SUPFAM" id="SSF81653">
    <property type="entry name" value="Calcium ATPase, transduction domain A"/>
    <property type="match status" value="1"/>
</dbReference>
<dbReference type="SUPFAM" id="SSF81665">
    <property type="entry name" value="Calcium ATPase, transmembrane domain M"/>
    <property type="match status" value="1"/>
</dbReference>
<dbReference type="SUPFAM" id="SSF56784">
    <property type="entry name" value="HAD-like"/>
    <property type="match status" value="1"/>
</dbReference>
<dbReference type="PROSITE" id="PS00154">
    <property type="entry name" value="ATPASE_E1_E2"/>
    <property type="match status" value="1"/>
</dbReference>
<dbReference type="PROSITE" id="PS50846">
    <property type="entry name" value="HMA_2"/>
    <property type="match status" value="1"/>
</dbReference>
<gene>
    <name type="primary">ctpG</name>
    <name type="ordered locus">Rv1992c</name>
    <name type="ORF">MTCY39.27</name>
</gene>
<comment type="catalytic activity">
    <reaction>
        <text>ATP + H2O = ADP + phosphate + H(+)</text>
        <dbReference type="Rhea" id="RHEA:13065"/>
        <dbReference type="ChEBI" id="CHEBI:15377"/>
        <dbReference type="ChEBI" id="CHEBI:15378"/>
        <dbReference type="ChEBI" id="CHEBI:30616"/>
        <dbReference type="ChEBI" id="CHEBI:43474"/>
        <dbReference type="ChEBI" id="CHEBI:456216"/>
    </reaction>
</comment>
<comment type="subcellular location">
    <subcellularLocation>
        <location evidence="5">Cell membrane</location>
        <topology evidence="5">Multi-pass membrane protein</topology>
    </subcellularLocation>
</comment>
<comment type="similarity">
    <text evidence="5">Belongs to the cation transport ATPase (P-type) (TC 3.A.3) family. Type IB subfamily.</text>
</comment>
<sequence>MTTVVDAEVQLTVVSDAAGRMRVQATGFQFDAGRAVAIEDTVGKVAGVQAVHAYPRTASIVIWYSRAICDTAAILSAIIDAETVPAAAVPAYASRSASNRKAGVVQKIIDWSTRTLSGVRRDVAAQPSGETSDACCDGEDNEDREPEQLWQVAKLRRAAFSGVLLTASLVAAWAYPLWPVVLGLKALALAVGASTFVPSSLKRLAEGRVGVGTLMTIAALGAVALGELGEAATLAFLFSISEGLEEYATARTRRGLRALLSLVPDQATVLREGTETIVASTELHVGDQMIVKPGERLATDGIIRAGRTALDVSAITGESVPVEVGPGDEVFAGSINGLGVLQVGVTATAANNSLARIVHIVEAEQVRKGASQRLADCIARPLVPSIMIAAALIAGTGSVLGNPLVWIERALVVLVAAAPCALAIAVPVTVVASIGAASRLGVLIKGGAALETLGTIRAVALDKTGTLTANRPVVIDVATTNGATREEVLAVAAALEARSEHPLAVAVLAATQATTAASDVQAVPGAGLIGRLDGRVVRLGRPGWLDAAELADHVACMQQAGATAVLVERDQQLLGAIAVRDELRPEAAEVVAGLRTGGYQVTMLTGDNHATAAALAAQAGIEQVHAELRPEDKAHLVAQLRARQPTAMVGDGVNDAPALAAADLGIAMGAMGTDVAIETADVALMGQDLRHLPQALDHARRSRQIMVQNVGLSLSIITVLMPLALFGILGLAAVVLVHEFTEVIVIANGVRAGRIKPLAGPPKTPDRTIPG</sequence>
<evidence type="ECO:0000250" key="1"/>
<evidence type="ECO:0000255" key="2"/>
<evidence type="ECO:0000255" key="3">
    <source>
        <dbReference type="PROSITE-ProRule" id="PRU00280"/>
    </source>
</evidence>
<evidence type="ECO:0000256" key="4">
    <source>
        <dbReference type="SAM" id="MobiDB-lite"/>
    </source>
</evidence>
<evidence type="ECO:0000305" key="5"/>
<organism>
    <name type="scientific">Mycobacterium tuberculosis (strain ATCC 25618 / H37Rv)</name>
    <dbReference type="NCBI Taxonomy" id="83332"/>
    <lineage>
        <taxon>Bacteria</taxon>
        <taxon>Bacillati</taxon>
        <taxon>Actinomycetota</taxon>
        <taxon>Actinomycetes</taxon>
        <taxon>Mycobacteriales</taxon>
        <taxon>Mycobacteriaceae</taxon>
        <taxon>Mycobacterium</taxon>
        <taxon>Mycobacterium tuberculosis complex</taxon>
    </lineage>
</organism>
<name>CTPG_MYCTU</name>